<gene>
    <name type="primary">Ndufb4</name>
</gene>
<sequence>MSGSKYKPAPLATLPSTLDPAEYDVSPETRRAQVERLSIRARLKREYLLQYNDPKRVSHIEDPALIRWTYARSANIYPNFRPTPKNSLLGAVAGFGPLIFWYYVFKTDRDRKERLIQEGKLDRKFNISY</sequence>
<name>NDUB4_MOUSE</name>
<proteinExistence type="evidence at protein level"/>
<organism>
    <name type="scientific">Mus musculus</name>
    <name type="common">Mouse</name>
    <dbReference type="NCBI Taxonomy" id="10090"/>
    <lineage>
        <taxon>Eukaryota</taxon>
        <taxon>Metazoa</taxon>
        <taxon>Chordata</taxon>
        <taxon>Craniata</taxon>
        <taxon>Vertebrata</taxon>
        <taxon>Euteleostomi</taxon>
        <taxon>Mammalia</taxon>
        <taxon>Eutheria</taxon>
        <taxon>Euarchontoglires</taxon>
        <taxon>Glires</taxon>
        <taxon>Rodentia</taxon>
        <taxon>Myomorpha</taxon>
        <taxon>Muroidea</taxon>
        <taxon>Muridae</taxon>
        <taxon>Murinae</taxon>
        <taxon>Mus</taxon>
        <taxon>Mus</taxon>
    </lineage>
</organism>
<protein>
    <recommendedName>
        <fullName>NADH dehydrogenase [ubiquinone] 1 beta subcomplex subunit 4</fullName>
    </recommendedName>
    <alternativeName>
        <fullName>Complex I-B15</fullName>
        <shortName>CI-B15</shortName>
    </alternativeName>
    <alternativeName>
        <fullName>NADH-ubiquinone oxidoreductase B15 subunit</fullName>
    </alternativeName>
</protein>
<comment type="function">
    <text evidence="4">Accessory subunit of the mitochondrial membrane respiratory chain NADH dehydrogenase (Complex I), that is believed not to be involved in catalysis. Complex I functions in the transfer of electrons from NADH to the respiratory chain. The immediate electron acceptor for the enzyme is believed to be ubiquinone.</text>
</comment>
<comment type="subunit">
    <text evidence="4">Complex I is composed of 45 different subunits.</text>
</comment>
<comment type="subcellular location">
    <subcellularLocation>
        <location evidence="4">Mitochondrion inner membrane</location>
        <topology evidence="3">Single-pass membrane protein</topology>
        <orientation evidence="1">Matrix side</orientation>
    </subcellularLocation>
</comment>
<comment type="similarity">
    <text evidence="5">Belongs to the complex I NDUFB4 subunit family.</text>
</comment>
<dbReference type="EMBL" id="AK009807">
    <property type="protein sequence ID" value="BAB26515.1"/>
    <property type="molecule type" value="mRNA"/>
</dbReference>
<dbReference type="EMBL" id="AK018707">
    <property type="protein sequence ID" value="BAB31358.1"/>
    <property type="molecule type" value="mRNA"/>
</dbReference>
<dbReference type="EMBL" id="BC056229">
    <property type="protein sequence ID" value="AAH56229.1"/>
    <property type="molecule type" value="mRNA"/>
</dbReference>
<dbReference type="CCDS" id="CCDS28161.1"/>
<dbReference type="RefSeq" id="NP_080886.1">
    <property type="nucleotide sequence ID" value="NM_026610.2"/>
</dbReference>
<dbReference type="RefSeq" id="XP_001476621.1">
    <property type="nucleotide sequence ID" value="XM_001476571.4"/>
</dbReference>
<dbReference type="RefSeq" id="XP_001478493.1">
    <property type="nucleotide sequence ID" value="XM_001478443.6"/>
</dbReference>
<dbReference type="PDB" id="6G2J">
    <property type="method" value="EM"/>
    <property type="resolution" value="3.30 A"/>
    <property type="chains" value="m=1-129"/>
</dbReference>
<dbReference type="PDB" id="6G72">
    <property type="method" value="EM"/>
    <property type="resolution" value="3.90 A"/>
    <property type="chains" value="m=1-129"/>
</dbReference>
<dbReference type="PDB" id="6ZR2">
    <property type="method" value="EM"/>
    <property type="resolution" value="3.10 A"/>
    <property type="chains" value="m=1-129"/>
</dbReference>
<dbReference type="PDB" id="6ZTQ">
    <property type="method" value="EM"/>
    <property type="resolution" value="3.00 A"/>
    <property type="chains" value="m=1-129"/>
</dbReference>
<dbReference type="PDB" id="7AK5">
    <property type="method" value="EM"/>
    <property type="resolution" value="3.17 A"/>
    <property type="chains" value="m=1-129"/>
</dbReference>
<dbReference type="PDB" id="7AK6">
    <property type="method" value="EM"/>
    <property type="resolution" value="3.82 A"/>
    <property type="chains" value="m=1-129"/>
</dbReference>
<dbReference type="PDB" id="7B93">
    <property type="method" value="EM"/>
    <property type="resolution" value="3.04 A"/>
    <property type="chains" value="m=1-129"/>
</dbReference>
<dbReference type="PDB" id="7PSA">
    <property type="method" value="EM"/>
    <property type="resolution" value="3.40 A"/>
    <property type="chains" value="m=1-129"/>
</dbReference>
<dbReference type="PDB" id="8C2S">
    <property type="method" value="EM"/>
    <property type="resolution" value="3.90 A"/>
    <property type="chains" value="m=1-129"/>
</dbReference>
<dbReference type="PDB" id="8CA3">
    <property type="method" value="EM"/>
    <property type="resolution" value="3.20 A"/>
    <property type="chains" value="m=1-129"/>
</dbReference>
<dbReference type="PDB" id="8CA5">
    <property type="method" value="EM"/>
    <property type="resolution" value="3.90 A"/>
    <property type="chains" value="m=1-129"/>
</dbReference>
<dbReference type="PDB" id="8IAO">
    <property type="method" value="EM"/>
    <property type="resolution" value="4.20 A"/>
    <property type="chains" value="m=1-129"/>
</dbReference>
<dbReference type="PDB" id="8IAQ">
    <property type="method" value="EM"/>
    <property type="resolution" value="3.40 A"/>
    <property type="chains" value="m=1-129"/>
</dbReference>
<dbReference type="PDB" id="8IB4">
    <property type="method" value="EM"/>
    <property type="resolution" value="4.30 A"/>
    <property type="chains" value="m=1-129"/>
</dbReference>
<dbReference type="PDB" id="8IB6">
    <property type="method" value="EM"/>
    <property type="resolution" value="3.30 A"/>
    <property type="chains" value="m=1-129"/>
</dbReference>
<dbReference type="PDB" id="8IB9">
    <property type="method" value="EM"/>
    <property type="resolution" value="4.30 A"/>
    <property type="chains" value="m=1-129"/>
</dbReference>
<dbReference type="PDB" id="8IBB">
    <property type="method" value="EM"/>
    <property type="resolution" value="3.30 A"/>
    <property type="chains" value="m=1-129"/>
</dbReference>
<dbReference type="PDB" id="8IBD">
    <property type="method" value="EM"/>
    <property type="resolution" value="4.20 A"/>
    <property type="chains" value="m=1-129"/>
</dbReference>
<dbReference type="PDB" id="8IBF">
    <property type="method" value="EM"/>
    <property type="resolution" value="3.30 A"/>
    <property type="chains" value="m=1-129"/>
</dbReference>
<dbReference type="PDB" id="8IC2">
    <property type="method" value="EM"/>
    <property type="resolution" value="6.30 A"/>
    <property type="chains" value="m=1-129"/>
</dbReference>
<dbReference type="PDB" id="8IC4">
    <property type="method" value="EM"/>
    <property type="resolution" value="3.20 A"/>
    <property type="chains" value="m=1-129"/>
</dbReference>
<dbReference type="PDB" id="8OLT">
    <property type="method" value="EM"/>
    <property type="resolution" value="2.84 A"/>
    <property type="chains" value="m=1-129"/>
</dbReference>
<dbReference type="PDB" id="8OM1">
    <property type="method" value="EM"/>
    <property type="resolution" value="2.39 A"/>
    <property type="chains" value="m=1-129"/>
</dbReference>
<dbReference type="PDB" id="8PW5">
    <property type="method" value="EM"/>
    <property type="resolution" value="3.60 A"/>
    <property type="chains" value="m1=1-129"/>
</dbReference>
<dbReference type="PDB" id="8PW6">
    <property type="method" value="EM"/>
    <property type="resolution" value="3.30 A"/>
    <property type="chains" value="m1=1-129"/>
</dbReference>
<dbReference type="PDB" id="8PW7">
    <property type="method" value="EM"/>
    <property type="resolution" value="3.50 A"/>
    <property type="chains" value="m1=1-129"/>
</dbReference>
<dbReference type="PDB" id="8RGP">
    <property type="method" value="EM"/>
    <property type="resolution" value="3.00 A"/>
    <property type="chains" value="m=1-129"/>
</dbReference>
<dbReference type="PDB" id="8RGQ">
    <property type="method" value="EM"/>
    <property type="resolution" value="3.00 A"/>
    <property type="chains" value="m=1-129"/>
</dbReference>
<dbReference type="PDB" id="8RGR">
    <property type="method" value="EM"/>
    <property type="resolution" value="2.90 A"/>
    <property type="chains" value="m=1-129"/>
</dbReference>
<dbReference type="PDB" id="8RGT">
    <property type="method" value="EM"/>
    <property type="resolution" value="3.10 A"/>
    <property type="chains" value="m=1-129"/>
</dbReference>
<dbReference type="PDB" id="8UCA">
    <property type="method" value="EM"/>
    <property type="resolution" value="3.70 A"/>
    <property type="chains" value="B4/b4=1-129"/>
</dbReference>
<dbReference type="PDBsum" id="6G2J"/>
<dbReference type="PDBsum" id="6G72"/>
<dbReference type="PDBsum" id="6ZR2"/>
<dbReference type="PDBsum" id="6ZTQ"/>
<dbReference type="PDBsum" id="7AK5"/>
<dbReference type="PDBsum" id="7AK6"/>
<dbReference type="PDBsum" id="7B93"/>
<dbReference type="PDBsum" id="7PSA"/>
<dbReference type="PDBsum" id="8C2S"/>
<dbReference type="PDBsum" id="8CA3"/>
<dbReference type="PDBsum" id="8CA5"/>
<dbReference type="PDBsum" id="8IAO"/>
<dbReference type="PDBsum" id="8IAQ"/>
<dbReference type="PDBsum" id="8IB4"/>
<dbReference type="PDBsum" id="8IB6"/>
<dbReference type="PDBsum" id="8IB9"/>
<dbReference type="PDBsum" id="8IBB"/>
<dbReference type="PDBsum" id="8IBD"/>
<dbReference type="PDBsum" id="8IBF"/>
<dbReference type="PDBsum" id="8IC2"/>
<dbReference type="PDBsum" id="8IC4"/>
<dbReference type="PDBsum" id="8OLT"/>
<dbReference type="PDBsum" id="8OM1"/>
<dbReference type="PDBsum" id="8PW5"/>
<dbReference type="PDBsum" id="8PW6"/>
<dbReference type="PDBsum" id="8PW7"/>
<dbReference type="PDBsum" id="8RGP"/>
<dbReference type="PDBsum" id="8RGQ"/>
<dbReference type="PDBsum" id="8RGR"/>
<dbReference type="PDBsum" id="8RGT"/>
<dbReference type="PDBsum" id="8UCA"/>
<dbReference type="EMDB" id="EMD-11377"/>
<dbReference type="EMDB" id="EMD-11424"/>
<dbReference type="EMDB" id="EMD-11810"/>
<dbReference type="EMDB" id="EMD-11811"/>
<dbReference type="EMDB" id="EMD-12095"/>
<dbReference type="EMDB" id="EMD-13611"/>
<dbReference type="EMDB" id="EMD-16398"/>
<dbReference type="EMDB" id="EMD-16516"/>
<dbReference type="EMDB" id="EMD-16518"/>
<dbReference type="EMDB" id="EMD-16962"/>
<dbReference type="EMDB" id="EMD-16965"/>
<dbReference type="EMDB" id="EMD-17989"/>
<dbReference type="EMDB" id="EMD-17990"/>
<dbReference type="EMDB" id="EMD-17991"/>
<dbReference type="EMDB" id="EMD-19145"/>
<dbReference type="EMDB" id="EMD-19146"/>
<dbReference type="EMDB" id="EMD-19147"/>
<dbReference type="EMDB" id="EMD-19148"/>
<dbReference type="EMDB" id="EMD-35313"/>
<dbReference type="EMDB" id="EMD-35315"/>
<dbReference type="EMDB" id="EMD-35331"/>
<dbReference type="EMDB" id="EMD-35333"/>
<dbReference type="EMDB" id="EMD-35336"/>
<dbReference type="EMDB" id="EMD-35338"/>
<dbReference type="EMDB" id="EMD-35340"/>
<dbReference type="EMDB" id="EMD-35342"/>
<dbReference type="EMDB" id="EMD-35352"/>
<dbReference type="EMDB" id="EMD-35354"/>
<dbReference type="EMDB" id="EMD-42122"/>
<dbReference type="EMDB" id="EMD-4345"/>
<dbReference type="EMDB" id="EMD-4356"/>
<dbReference type="SMR" id="Q9CQC7"/>
<dbReference type="BioGRID" id="212719">
    <property type="interactions" value="35"/>
</dbReference>
<dbReference type="BioGRID" id="784605">
    <property type="interactions" value="1"/>
</dbReference>
<dbReference type="BioGRID" id="785760">
    <property type="interactions" value="3"/>
</dbReference>
<dbReference type="ComplexPortal" id="CPX-266">
    <property type="entry name" value="Mitochondrial respiratory chain complex I"/>
</dbReference>
<dbReference type="CORUM" id="Q9CQC7"/>
<dbReference type="FunCoup" id="Q9CQC7">
    <property type="interactions" value="1065"/>
</dbReference>
<dbReference type="IntAct" id="Q9CQC7">
    <property type="interactions" value="8"/>
</dbReference>
<dbReference type="MINT" id="Q9CQC7"/>
<dbReference type="STRING" id="10090.ENSMUSP00000023514"/>
<dbReference type="GlyGen" id="Q9CQC7">
    <property type="glycosylation" value="1 site, 1 O-linked glycan (1 site)"/>
</dbReference>
<dbReference type="iPTMnet" id="Q9CQC7"/>
<dbReference type="PhosphoSitePlus" id="Q9CQC7"/>
<dbReference type="SwissPalm" id="Q9CQC7"/>
<dbReference type="jPOST" id="Q9CQC7"/>
<dbReference type="PaxDb" id="10090-ENSMUSP00000023514"/>
<dbReference type="ProteomicsDB" id="286166"/>
<dbReference type="Pumba" id="Q9CQC7"/>
<dbReference type="Antibodypedia" id="32798">
    <property type="antibodies" value="78 antibodies from 24 providers"/>
</dbReference>
<dbReference type="DNASU" id="68194"/>
<dbReference type="Ensembl" id="ENSMUST00000023514.4">
    <property type="protein sequence ID" value="ENSMUSP00000023514.4"/>
    <property type="gene ID" value="ENSMUSG00000022820.5"/>
</dbReference>
<dbReference type="GeneID" id="68194"/>
<dbReference type="KEGG" id="mmu:100042503"/>
<dbReference type="KEGG" id="mmu:68194"/>
<dbReference type="UCSC" id="uc007zei.1">
    <property type="organism name" value="mouse"/>
</dbReference>
<dbReference type="AGR" id="MGI:1915444"/>
<dbReference type="CTD" id="100042503"/>
<dbReference type="CTD" id="4710"/>
<dbReference type="MGI" id="MGI:1915444">
    <property type="gene designation" value="Ndufb4"/>
</dbReference>
<dbReference type="VEuPathDB" id="HostDB:ENSMUSG00000022820"/>
<dbReference type="eggNOG" id="ENOG502S2HF">
    <property type="taxonomic scope" value="Eukaryota"/>
</dbReference>
<dbReference type="GeneTree" id="ENSGT00390000007133"/>
<dbReference type="HOGENOM" id="CLU_123402_0_0_1"/>
<dbReference type="InParanoid" id="Q9CQC7"/>
<dbReference type="OMA" id="REYLLHY"/>
<dbReference type="OrthoDB" id="5818798at2759"/>
<dbReference type="PhylomeDB" id="Q9CQC7"/>
<dbReference type="TreeFam" id="TF328761"/>
<dbReference type="Reactome" id="R-MMU-611105">
    <property type="pathway name" value="Respiratory electron transport"/>
</dbReference>
<dbReference type="Reactome" id="R-MMU-6799198">
    <property type="pathway name" value="Complex I biogenesis"/>
</dbReference>
<dbReference type="BioGRID-ORCS" id="68194">
    <property type="hits" value="23 hits in 80 CRISPR screens"/>
</dbReference>
<dbReference type="CD-CODE" id="CE726F99">
    <property type="entry name" value="Postsynaptic density"/>
</dbReference>
<dbReference type="ChiTaRS" id="Ndufb4">
    <property type="organism name" value="mouse"/>
</dbReference>
<dbReference type="PRO" id="PR:Q9CQC7"/>
<dbReference type="Proteomes" id="UP000000589">
    <property type="component" value="Chromosome 16"/>
</dbReference>
<dbReference type="RNAct" id="Q9CQC7">
    <property type="molecule type" value="protein"/>
</dbReference>
<dbReference type="Bgee" id="ENSMUSG00000022820">
    <property type="expression patterns" value="Expressed in right kidney and 88 other cell types or tissues"/>
</dbReference>
<dbReference type="GO" id="GO:0005743">
    <property type="term" value="C:mitochondrial inner membrane"/>
    <property type="evidence" value="ECO:0000314"/>
    <property type="project" value="UniProtKB"/>
</dbReference>
<dbReference type="GO" id="GO:0005739">
    <property type="term" value="C:mitochondrion"/>
    <property type="evidence" value="ECO:0007005"/>
    <property type="project" value="MGI"/>
</dbReference>
<dbReference type="GO" id="GO:0005654">
    <property type="term" value="C:nucleoplasm"/>
    <property type="evidence" value="ECO:0007669"/>
    <property type="project" value="Ensembl"/>
</dbReference>
<dbReference type="GO" id="GO:0045271">
    <property type="term" value="C:respiratory chain complex I"/>
    <property type="evidence" value="ECO:0000314"/>
    <property type="project" value="UniProtKB"/>
</dbReference>
<dbReference type="GO" id="GO:0009060">
    <property type="term" value="P:aerobic respiration"/>
    <property type="evidence" value="ECO:0000303"/>
    <property type="project" value="ComplexPortal"/>
</dbReference>
<dbReference type="GO" id="GO:0042776">
    <property type="term" value="P:proton motive force-driven mitochondrial ATP synthesis"/>
    <property type="evidence" value="ECO:0000303"/>
    <property type="project" value="ComplexPortal"/>
</dbReference>
<dbReference type="InterPro" id="IPR009866">
    <property type="entry name" value="NADH_UbQ_OxRdtase_NDUFB4_su"/>
</dbReference>
<dbReference type="PANTHER" id="PTHR15469:SF0">
    <property type="entry name" value="NADH DEHYDROGENASE [UBIQUINONE] 1 BETA SUBCOMPLEX SUBUNIT 4"/>
    <property type="match status" value="1"/>
</dbReference>
<dbReference type="PANTHER" id="PTHR15469">
    <property type="entry name" value="NADH-UBIQUINONE OXIDOREDUCTASE B15 SUBUNIT"/>
    <property type="match status" value="1"/>
</dbReference>
<dbReference type="Pfam" id="PF07225">
    <property type="entry name" value="NDUF_B4"/>
    <property type="match status" value="1"/>
</dbReference>
<feature type="initiator methionine" description="Removed" evidence="2">
    <location>
        <position position="1"/>
    </location>
</feature>
<feature type="chain" id="PRO_0000118801" description="NADH dehydrogenase [ubiquinone] 1 beta subcomplex subunit 4">
    <location>
        <begin position="2"/>
        <end position="129"/>
    </location>
</feature>
<feature type="transmembrane region" description="Helical" evidence="3">
    <location>
        <begin position="88"/>
        <end position="105"/>
    </location>
</feature>
<feature type="modified residue" description="N-acetylserine" evidence="2">
    <location>
        <position position="2"/>
    </location>
</feature>
<feature type="modified residue" description="Phosphoserine" evidence="7">
    <location>
        <position position="26"/>
    </location>
</feature>
<feature type="strand" evidence="10">
    <location>
        <begin position="10"/>
        <end position="12"/>
    </location>
</feature>
<feature type="turn" evidence="10">
    <location>
        <begin position="16"/>
        <end position="18"/>
    </location>
</feature>
<feature type="helix" evidence="9">
    <location>
        <begin position="20"/>
        <end position="22"/>
    </location>
</feature>
<feature type="helix" evidence="9">
    <location>
        <begin position="27"/>
        <end position="52"/>
    </location>
</feature>
<feature type="helix" evidence="9">
    <location>
        <begin position="63"/>
        <end position="71"/>
    </location>
</feature>
<feature type="turn" evidence="9">
    <location>
        <begin position="72"/>
        <end position="76"/>
    </location>
</feature>
<feature type="helix" evidence="9">
    <location>
        <begin position="77"/>
        <end position="79"/>
    </location>
</feature>
<feature type="helix" evidence="9">
    <location>
        <begin position="84"/>
        <end position="117"/>
    </location>
</feature>
<feature type="turn" evidence="8">
    <location>
        <begin position="119"/>
        <end position="121"/>
    </location>
</feature>
<keyword id="KW-0002">3D-structure</keyword>
<keyword id="KW-0007">Acetylation</keyword>
<keyword id="KW-0903">Direct protein sequencing</keyword>
<keyword id="KW-0249">Electron transport</keyword>
<keyword id="KW-0472">Membrane</keyword>
<keyword id="KW-0496">Mitochondrion</keyword>
<keyword id="KW-0999">Mitochondrion inner membrane</keyword>
<keyword id="KW-0597">Phosphoprotein</keyword>
<keyword id="KW-1185">Reference proteome</keyword>
<keyword id="KW-0679">Respiratory chain</keyword>
<keyword id="KW-0812">Transmembrane</keyword>
<keyword id="KW-1133">Transmembrane helix</keyword>
<keyword id="KW-0813">Transport</keyword>
<reference key="1">
    <citation type="journal article" date="2005" name="Science">
        <title>The transcriptional landscape of the mammalian genome.</title>
        <authorList>
            <person name="Carninci P."/>
            <person name="Kasukawa T."/>
            <person name="Katayama S."/>
            <person name="Gough J."/>
            <person name="Frith M.C."/>
            <person name="Maeda N."/>
            <person name="Oyama R."/>
            <person name="Ravasi T."/>
            <person name="Lenhard B."/>
            <person name="Wells C."/>
            <person name="Kodzius R."/>
            <person name="Shimokawa K."/>
            <person name="Bajic V.B."/>
            <person name="Brenner S.E."/>
            <person name="Batalov S."/>
            <person name="Forrest A.R."/>
            <person name="Zavolan M."/>
            <person name="Davis M.J."/>
            <person name="Wilming L.G."/>
            <person name="Aidinis V."/>
            <person name="Allen J.E."/>
            <person name="Ambesi-Impiombato A."/>
            <person name="Apweiler R."/>
            <person name="Aturaliya R.N."/>
            <person name="Bailey T.L."/>
            <person name="Bansal M."/>
            <person name="Baxter L."/>
            <person name="Beisel K.W."/>
            <person name="Bersano T."/>
            <person name="Bono H."/>
            <person name="Chalk A.M."/>
            <person name="Chiu K.P."/>
            <person name="Choudhary V."/>
            <person name="Christoffels A."/>
            <person name="Clutterbuck D.R."/>
            <person name="Crowe M.L."/>
            <person name="Dalla E."/>
            <person name="Dalrymple B.P."/>
            <person name="de Bono B."/>
            <person name="Della Gatta G."/>
            <person name="di Bernardo D."/>
            <person name="Down T."/>
            <person name="Engstrom P."/>
            <person name="Fagiolini M."/>
            <person name="Faulkner G."/>
            <person name="Fletcher C.F."/>
            <person name="Fukushima T."/>
            <person name="Furuno M."/>
            <person name="Futaki S."/>
            <person name="Gariboldi M."/>
            <person name="Georgii-Hemming P."/>
            <person name="Gingeras T.R."/>
            <person name="Gojobori T."/>
            <person name="Green R.E."/>
            <person name="Gustincich S."/>
            <person name="Harbers M."/>
            <person name="Hayashi Y."/>
            <person name="Hensch T.K."/>
            <person name="Hirokawa N."/>
            <person name="Hill D."/>
            <person name="Huminiecki L."/>
            <person name="Iacono M."/>
            <person name="Ikeo K."/>
            <person name="Iwama A."/>
            <person name="Ishikawa T."/>
            <person name="Jakt M."/>
            <person name="Kanapin A."/>
            <person name="Katoh M."/>
            <person name="Kawasawa Y."/>
            <person name="Kelso J."/>
            <person name="Kitamura H."/>
            <person name="Kitano H."/>
            <person name="Kollias G."/>
            <person name="Krishnan S.P."/>
            <person name="Kruger A."/>
            <person name="Kummerfeld S.K."/>
            <person name="Kurochkin I.V."/>
            <person name="Lareau L.F."/>
            <person name="Lazarevic D."/>
            <person name="Lipovich L."/>
            <person name="Liu J."/>
            <person name="Liuni S."/>
            <person name="McWilliam S."/>
            <person name="Madan Babu M."/>
            <person name="Madera M."/>
            <person name="Marchionni L."/>
            <person name="Matsuda H."/>
            <person name="Matsuzawa S."/>
            <person name="Miki H."/>
            <person name="Mignone F."/>
            <person name="Miyake S."/>
            <person name="Morris K."/>
            <person name="Mottagui-Tabar S."/>
            <person name="Mulder N."/>
            <person name="Nakano N."/>
            <person name="Nakauchi H."/>
            <person name="Ng P."/>
            <person name="Nilsson R."/>
            <person name="Nishiguchi S."/>
            <person name="Nishikawa S."/>
            <person name="Nori F."/>
            <person name="Ohara O."/>
            <person name="Okazaki Y."/>
            <person name="Orlando V."/>
            <person name="Pang K.C."/>
            <person name="Pavan W.J."/>
            <person name="Pavesi G."/>
            <person name="Pesole G."/>
            <person name="Petrovsky N."/>
            <person name="Piazza S."/>
            <person name="Reed J."/>
            <person name="Reid J.F."/>
            <person name="Ring B.Z."/>
            <person name="Ringwald M."/>
            <person name="Rost B."/>
            <person name="Ruan Y."/>
            <person name="Salzberg S.L."/>
            <person name="Sandelin A."/>
            <person name="Schneider C."/>
            <person name="Schoenbach C."/>
            <person name="Sekiguchi K."/>
            <person name="Semple C.A."/>
            <person name="Seno S."/>
            <person name="Sessa L."/>
            <person name="Sheng Y."/>
            <person name="Shibata Y."/>
            <person name="Shimada H."/>
            <person name="Shimada K."/>
            <person name="Silva D."/>
            <person name="Sinclair B."/>
            <person name="Sperling S."/>
            <person name="Stupka E."/>
            <person name="Sugiura K."/>
            <person name="Sultana R."/>
            <person name="Takenaka Y."/>
            <person name="Taki K."/>
            <person name="Tammoja K."/>
            <person name="Tan S.L."/>
            <person name="Tang S."/>
            <person name="Taylor M.S."/>
            <person name="Tegner J."/>
            <person name="Teichmann S.A."/>
            <person name="Ueda H.R."/>
            <person name="van Nimwegen E."/>
            <person name="Verardo R."/>
            <person name="Wei C.L."/>
            <person name="Yagi K."/>
            <person name="Yamanishi H."/>
            <person name="Zabarovsky E."/>
            <person name="Zhu S."/>
            <person name="Zimmer A."/>
            <person name="Hide W."/>
            <person name="Bult C."/>
            <person name="Grimmond S.M."/>
            <person name="Teasdale R.D."/>
            <person name="Liu E.T."/>
            <person name="Brusic V."/>
            <person name="Quackenbush J."/>
            <person name="Wahlestedt C."/>
            <person name="Mattick J.S."/>
            <person name="Hume D.A."/>
            <person name="Kai C."/>
            <person name="Sasaki D."/>
            <person name="Tomaru Y."/>
            <person name="Fukuda S."/>
            <person name="Kanamori-Katayama M."/>
            <person name="Suzuki M."/>
            <person name="Aoki J."/>
            <person name="Arakawa T."/>
            <person name="Iida J."/>
            <person name="Imamura K."/>
            <person name="Itoh M."/>
            <person name="Kato T."/>
            <person name="Kawaji H."/>
            <person name="Kawagashira N."/>
            <person name="Kawashima T."/>
            <person name="Kojima M."/>
            <person name="Kondo S."/>
            <person name="Konno H."/>
            <person name="Nakano K."/>
            <person name="Ninomiya N."/>
            <person name="Nishio T."/>
            <person name="Okada M."/>
            <person name="Plessy C."/>
            <person name="Shibata K."/>
            <person name="Shiraki T."/>
            <person name="Suzuki S."/>
            <person name="Tagami M."/>
            <person name="Waki K."/>
            <person name="Watahiki A."/>
            <person name="Okamura-Oho Y."/>
            <person name="Suzuki H."/>
            <person name="Kawai J."/>
            <person name="Hayashizaki Y."/>
        </authorList>
    </citation>
    <scope>NUCLEOTIDE SEQUENCE [LARGE SCALE MRNA]</scope>
    <source>
        <strain>C57BL/6J</strain>
        <tissue>Kidney</tissue>
        <tissue>Tongue</tissue>
    </source>
</reference>
<reference key="2">
    <citation type="journal article" date="2004" name="Genome Res.">
        <title>The status, quality, and expansion of the NIH full-length cDNA project: the Mammalian Gene Collection (MGC).</title>
        <authorList>
            <consortium name="The MGC Project Team"/>
        </authorList>
    </citation>
    <scope>NUCLEOTIDE SEQUENCE [LARGE SCALE MRNA]</scope>
    <source>
        <strain>FVB/N</strain>
        <tissue>Colon</tissue>
    </source>
</reference>
<reference key="3">
    <citation type="submission" date="2007-04" db="UniProtKB">
        <authorList>
            <person name="Lubec G."/>
            <person name="Kang S.U."/>
        </authorList>
    </citation>
    <scope>PROTEIN SEQUENCE OF 6-40; 46-67 AND 73-85</scope>
    <scope>IDENTIFICATION BY MASS SPECTROMETRY</scope>
    <source>
        <strain>C57BL/6J</strain>
        <tissue>Brain</tissue>
    </source>
</reference>
<reference key="4">
    <citation type="journal article" date="2010" name="Cell">
        <title>A tissue-specific atlas of mouse protein phosphorylation and expression.</title>
        <authorList>
            <person name="Huttlin E.L."/>
            <person name="Jedrychowski M.P."/>
            <person name="Elias J.E."/>
            <person name="Goswami T."/>
            <person name="Rad R."/>
            <person name="Beausoleil S.A."/>
            <person name="Villen J."/>
            <person name="Haas W."/>
            <person name="Sowa M.E."/>
            <person name="Gygi S.P."/>
        </authorList>
    </citation>
    <scope>PHOSPHORYLATION [LARGE SCALE ANALYSIS] AT SER-26</scope>
    <scope>IDENTIFICATION BY MASS SPECTROMETRY [LARGE SCALE ANALYSIS]</scope>
    <source>
        <tissue>Brain</tissue>
        <tissue>Brown adipose tissue</tissue>
        <tissue>Heart</tissue>
        <tissue>Kidney</tissue>
        <tissue>Liver</tissue>
        <tissue>Lung</tissue>
        <tissue>Pancreas</tissue>
        <tissue>Spleen</tissue>
        <tissue>Testis</tissue>
    </source>
</reference>
<reference evidence="6" key="5">
    <citation type="journal article" date="2024" name="Nat. Struct. Mol. Biol.">
        <title>SCAF1 drives the compositional diversity of mammalian respirasomes.</title>
        <authorList>
            <person name="Vercellino I."/>
            <person name="Sazanov L.A."/>
        </authorList>
    </citation>
    <scope>STRUCTURE BY ELECTRON MICROSCOPY (3.60 ANGSTROMS) IN COMPLEX WITH MITOCHONDRIAL RESPIRATORY SUPERCOMPLEX</scope>
    <scope>FUNCTION</scope>
    <scope>SUBCELLULAR LOCATION</scope>
    <scope>SUBUNIT</scope>
</reference>
<accession>Q9CQC7</accession>
<evidence type="ECO:0000250" key="1">
    <source>
        <dbReference type="UniProtKB" id="O95168"/>
    </source>
</evidence>
<evidence type="ECO:0000250" key="2">
    <source>
        <dbReference type="UniProtKB" id="P48305"/>
    </source>
</evidence>
<evidence type="ECO:0000255" key="3"/>
<evidence type="ECO:0000269" key="4">
    <source>
    </source>
</evidence>
<evidence type="ECO:0000305" key="5"/>
<evidence type="ECO:0007744" key="6">
    <source>
        <dbReference type="PDB" id="8PW5"/>
    </source>
</evidence>
<evidence type="ECO:0007744" key="7">
    <source>
    </source>
</evidence>
<evidence type="ECO:0007829" key="8">
    <source>
        <dbReference type="PDB" id="6G2J"/>
    </source>
</evidence>
<evidence type="ECO:0007829" key="9">
    <source>
        <dbReference type="PDB" id="8OM1"/>
    </source>
</evidence>
<evidence type="ECO:0007829" key="10">
    <source>
        <dbReference type="PDB" id="8RGR"/>
    </source>
</evidence>